<feature type="chain" id="PRO_1000185797" description="Lipoate-protein ligase A">
    <location>
        <begin position="1"/>
        <end position="338"/>
    </location>
</feature>
<feature type="domain" description="BPL/LPL catalytic" evidence="2">
    <location>
        <begin position="29"/>
        <end position="216"/>
    </location>
</feature>
<feature type="binding site" evidence="1">
    <location>
        <position position="71"/>
    </location>
    <ligand>
        <name>ATP</name>
        <dbReference type="ChEBI" id="CHEBI:30616"/>
    </ligand>
</feature>
<feature type="binding site" evidence="1">
    <location>
        <begin position="76"/>
        <end position="79"/>
    </location>
    <ligand>
        <name>ATP</name>
        <dbReference type="ChEBI" id="CHEBI:30616"/>
    </ligand>
</feature>
<feature type="binding site" evidence="1">
    <location>
        <position position="134"/>
    </location>
    <ligand>
        <name>(R)-lipoate</name>
        <dbReference type="ChEBI" id="CHEBI:83088"/>
    </ligand>
</feature>
<feature type="binding site" evidence="1">
    <location>
        <position position="134"/>
    </location>
    <ligand>
        <name>ATP</name>
        <dbReference type="ChEBI" id="CHEBI:30616"/>
    </ligand>
</feature>
<reference key="1">
    <citation type="journal article" date="2009" name="PLoS ONE">
        <title>Salmonella paratyphi C: genetic divergence from Salmonella choleraesuis and pathogenic convergence with Salmonella typhi.</title>
        <authorList>
            <person name="Liu W.-Q."/>
            <person name="Feng Y."/>
            <person name="Wang Y."/>
            <person name="Zou Q.-H."/>
            <person name="Chen F."/>
            <person name="Guo J.-T."/>
            <person name="Peng Y.-H."/>
            <person name="Jin Y."/>
            <person name="Li Y.-G."/>
            <person name="Hu S.-N."/>
            <person name="Johnston R.N."/>
            <person name="Liu G.-R."/>
            <person name="Liu S.-L."/>
        </authorList>
    </citation>
    <scope>NUCLEOTIDE SEQUENCE [LARGE SCALE GENOMIC DNA]</scope>
    <source>
        <strain>RKS4594</strain>
    </source>
</reference>
<comment type="function">
    <text evidence="1">Catalyzes both the ATP-dependent activation of exogenously supplied lipoate to lipoyl-AMP and the transfer of the activated lipoyl onto the lipoyl domains of lipoate-dependent enzymes.</text>
</comment>
<comment type="catalytic activity">
    <reaction evidence="1">
        <text>L-lysyl-[lipoyl-carrier protein] + (R)-lipoate + ATP = N(6)-[(R)-lipoyl]-L-lysyl-[lipoyl-carrier protein] + AMP + diphosphate + H(+)</text>
        <dbReference type="Rhea" id="RHEA:49288"/>
        <dbReference type="Rhea" id="RHEA-COMP:10500"/>
        <dbReference type="Rhea" id="RHEA-COMP:10502"/>
        <dbReference type="ChEBI" id="CHEBI:15378"/>
        <dbReference type="ChEBI" id="CHEBI:29969"/>
        <dbReference type="ChEBI" id="CHEBI:30616"/>
        <dbReference type="ChEBI" id="CHEBI:33019"/>
        <dbReference type="ChEBI" id="CHEBI:83088"/>
        <dbReference type="ChEBI" id="CHEBI:83099"/>
        <dbReference type="ChEBI" id="CHEBI:456215"/>
        <dbReference type="EC" id="6.3.1.20"/>
    </reaction>
</comment>
<comment type="pathway">
    <text evidence="1">Protein modification; protein lipoylation via exogenous pathway; protein N(6)-(lipoyl)lysine from lipoate: step 1/2.</text>
</comment>
<comment type="pathway">
    <text evidence="1">Protein modification; protein lipoylation via exogenous pathway; protein N(6)-(lipoyl)lysine from lipoate: step 2/2.</text>
</comment>
<comment type="subunit">
    <text evidence="1">Monomer.</text>
</comment>
<comment type="subcellular location">
    <subcellularLocation>
        <location evidence="1">Cytoplasm</location>
    </subcellularLocation>
</comment>
<comment type="miscellaneous">
    <text evidence="1">In the transfer reaction, the free carboxyl group of lipoic acid is attached via an amide linkage to the epsilon-amino group of a specific lysine residue of lipoyl domains of lipoate-dependent enzymes.</text>
</comment>
<comment type="similarity">
    <text evidence="1">Belongs to the LplA family.</text>
</comment>
<organism>
    <name type="scientific">Salmonella paratyphi C (strain RKS4594)</name>
    <dbReference type="NCBI Taxonomy" id="476213"/>
    <lineage>
        <taxon>Bacteria</taxon>
        <taxon>Pseudomonadati</taxon>
        <taxon>Pseudomonadota</taxon>
        <taxon>Gammaproteobacteria</taxon>
        <taxon>Enterobacterales</taxon>
        <taxon>Enterobacteriaceae</taxon>
        <taxon>Salmonella</taxon>
    </lineage>
</organism>
<gene>
    <name evidence="1" type="primary">lplA</name>
    <name type="ordered locus">SPC_4708</name>
</gene>
<accession>C0Q7M8</accession>
<keyword id="KW-0067">ATP-binding</keyword>
<keyword id="KW-0963">Cytoplasm</keyword>
<keyword id="KW-0436">Ligase</keyword>
<keyword id="KW-0547">Nucleotide-binding</keyword>
<sequence length="338" mass="37700">MTTLRLLISDSYDPWFNLAVEECIFRQMPATQRVLFLWRNADTVVIGRAQNPWKECNTRRMEEDNVRLARRSSGGGAVFHDLGNTCFTFMAGKPEYDKTISTHIVLAALNSLGVMADASGRNDLVVKTPDGDRKVSGSAYRETKDRGFHHGTLLLNADLSRLANYLNPDKKKLAAKGITSVRSRVANLTELLPGITHEQVCQAVTEAFFAHYGERVDAEVISPNKTPDLPNFAETFARQSSWEWNFGQAPAFSHLLDEHFTWGGVELHFDVEKGVITRAQVFTDSLNPAPLEALAGRLQGCQYRADVLEQACESLIAEFPAQKGELRELAAWMAQAVR</sequence>
<protein>
    <recommendedName>
        <fullName evidence="1">Lipoate-protein ligase A</fullName>
        <ecNumber evidence="1">6.3.1.20</ecNumber>
    </recommendedName>
    <alternativeName>
        <fullName evidence="1">Lipoate--protein ligase</fullName>
    </alternativeName>
</protein>
<dbReference type="EC" id="6.3.1.20" evidence="1"/>
<dbReference type="EMBL" id="CP000857">
    <property type="protein sequence ID" value="ACN48751.1"/>
    <property type="molecule type" value="Genomic_DNA"/>
</dbReference>
<dbReference type="RefSeq" id="WP_000209765.1">
    <property type="nucleotide sequence ID" value="NC_012125.1"/>
</dbReference>
<dbReference type="SMR" id="C0Q7M8"/>
<dbReference type="KEGG" id="sei:SPC_4708"/>
<dbReference type="HOGENOM" id="CLU_022986_0_1_6"/>
<dbReference type="UniPathway" id="UPA00537">
    <property type="reaction ID" value="UER00594"/>
</dbReference>
<dbReference type="UniPathway" id="UPA00537">
    <property type="reaction ID" value="UER00595"/>
</dbReference>
<dbReference type="Proteomes" id="UP000001599">
    <property type="component" value="Chromosome"/>
</dbReference>
<dbReference type="GO" id="GO:0005829">
    <property type="term" value="C:cytosol"/>
    <property type="evidence" value="ECO:0007669"/>
    <property type="project" value="TreeGrafter"/>
</dbReference>
<dbReference type="GO" id="GO:0005524">
    <property type="term" value="F:ATP binding"/>
    <property type="evidence" value="ECO:0007669"/>
    <property type="project" value="UniProtKB-KW"/>
</dbReference>
<dbReference type="GO" id="GO:0016979">
    <property type="term" value="F:lipoate-protein ligase activity"/>
    <property type="evidence" value="ECO:0007669"/>
    <property type="project" value="UniProtKB-UniRule"/>
</dbReference>
<dbReference type="GO" id="GO:0017118">
    <property type="term" value="F:lipoyltransferase activity"/>
    <property type="evidence" value="ECO:0007669"/>
    <property type="project" value="TreeGrafter"/>
</dbReference>
<dbReference type="GO" id="GO:0036211">
    <property type="term" value="P:protein modification process"/>
    <property type="evidence" value="ECO:0007669"/>
    <property type="project" value="InterPro"/>
</dbReference>
<dbReference type="CDD" id="cd16443">
    <property type="entry name" value="LplA"/>
    <property type="match status" value="1"/>
</dbReference>
<dbReference type="FunFam" id="3.30.930.10:FF:000024">
    <property type="entry name" value="Lipoate-protein ligase A"/>
    <property type="match status" value="1"/>
</dbReference>
<dbReference type="Gene3D" id="3.30.930.10">
    <property type="entry name" value="Bira Bifunctional Protein, Domain 2"/>
    <property type="match status" value="1"/>
</dbReference>
<dbReference type="Gene3D" id="3.30.390.50">
    <property type="entry name" value="CO dehydrogenase flavoprotein, C-terminal domain"/>
    <property type="match status" value="1"/>
</dbReference>
<dbReference type="HAMAP" id="MF_01602">
    <property type="entry name" value="LplA"/>
    <property type="match status" value="1"/>
</dbReference>
<dbReference type="InterPro" id="IPR045864">
    <property type="entry name" value="aa-tRNA-synth_II/BPL/LPL"/>
</dbReference>
<dbReference type="InterPro" id="IPR004143">
    <property type="entry name" value="BPL_LPL_catalytic"/>
</dbReference>
<dbReference type="InterPro" id="IPR023741">
    <property type="entry name" value="Lipoate_ligase_A"/>
</dbReference>
<dbReference type="InterPro" id="IPR019491">
    <property type="entry name" value="Lipoate_protein_ligase_C"/>
</dbReference>
<dbReference type="InterPro" id="IPR004562">
    <property type="entry name" value="LipoylTrfase_LipoateP_Ligase"/>
</dbReference>
<dbReference type="NCBIfam" id="TIGR00545">
    <property type="entry name" value="lipoyltrans"/>
    <property type="match status" value="1"/>
</dbReference>
<dbReference type="PANTHER" id="PTHR12561">
    <property type="entry name" value="LIPOATE-PROTEIN LIGASE"/>
    <property type="match status" value="1"/>
</dbReference>
<dbReference type="PANTHER" id="PTHR12561:SF3">
    <property type="entry name" value="LIPOYLTRANSFERASE 1, MITOCHONDRIAL"/>
    <property type="match status" value="1"/>
</dbReference>
<dbReference type="Pfam" id="PF10437">
    <property type="entry name" value="Lip_prot_lig_C"/>
    <property type="match status" value="1"/>
</dbReference>
<dbReference type="Pfam" id="PF21948">
    <property type="entry name" value="LplA-B_cat"/>
    <property type="match status" value="1"/>
</dbReference>
<dbReference type="SUPFAM" id="SSF55681">
    <property type="entry name" value="Class II aaRS and biotin synthetases"/>
    <property type="match status" value="1"/>
</dbReference>
<dbReference type="SUPFAM" id="SSF82649">
    <property type="entry name" value="SufE/NifU"/>
    <property type="match status" value="1"/>
</dbReference>
<dbReference type="PROSITE" id="PS51733">
    <property type="entry name" value="BPL_LPL_CATALYTIC"/>
    <property type="match status" value="1"/>
</dbReference>
<evidence type="ECO:0000255" key="1">
    <source>
        <dbReference type="HAMAP-Rule" id="MF_01602"/>
    </source>
</evidence>
<evidence type="ECO:0000255" key="2">
    <source>
        <dbReference type="PROSITE-ProRule" id="PRU01067"/>
    </source>
</evidence>
<name>LPLA_SALPC</name>
<proteinExistence type="inferred from homology"/>